<dbReference type="EMBL" id="AE014134">
    <property type="protein sequence ID" value="AAF53991.1"/>
    <property type="molecule type" value="Genomic_DNA"/>
</dbReference>
<dbReference type="EMBL" id="BT028819">
    <property type="protein sequence ID" value="ABI34200.4"/>
    <property type="status" value="ALT_INIT"/>
    <property type="molecule type" value="mRNA"/>
</dbReference>
<dbReference type="EMBL" id="BT028851">
    <property type="protein sequence ID" value="ABI34232.3"/>
    <property type="status" value="ALT_INIT"/>
    <property type="molecule type" value="mRNA"/>
</dbReference>
<dbReference type="RefSeq" id="NP_001260674.1">
    <property type="nucleotide sequence ID" value="NM_001273745.1"/>
</dbReference>
<dbReference type="RefSeq" id="NP_523611.1">
    <property type="nucleotide sequence ID" value="NM_078887.3"/>
</dbReference>
<dbReference type="SMR" id="B6VQA1"/>
<dbReference type="BioGRID" id="61353">
    <property type="interactions" value="45"/>
</dbReference>
<dbReference type="FunCoup" id="B6VQA1">
    <property type="interactions" value="9"/>
</dbReference>
<dbReference type="IntAct" id="B6VQA1">
    <property type="interactions" value="32"/>
</dbReference>
<dbReference type="STRING" id="7227.FBpp0305546"/>
<dbReference type="GlyCosmos" id="B6VQA1">
    <property type="glycosylation" value="7 sites, No reported glycans"/>
</dbReference>
<dbReference type="GlyGen" id="B6VQA1">
    <property type="glycosylation" value="7 sites"/>
</dbReference>
<dbReference type="PaxDb" id="7227-FBpp0305546"/>
<dbReference type="DNASU" id="35404"/>
<dbReference type="EnsemblMetazoa" id="FBtr0081514">
    <property type="protein sequence ID" value="FBpp0081042"/>
    <property type="gene ID" value="FBgn0023091"/>
</dbReference>
<dbReference type="EnsemblMetazoa" id="FBtr0333354">
    <property type="protein sequence ID" value="FBpp0305546"/>
    <property type="gene ID" value="FBgn0023091"/>
</dbReference>
<dbReference type="GeneID" id="35404"/>
<dbReference type="KEGG" id="dme:Dmel_CG8667"/>
<dbReference type="UCSC" id="CG8667-RA">
    <property type="organism name" value="d. melanogaster"/>
</dbReference>
<dbReference type="AGR" id="FB:FBgn0023091"/>
<dbReference type="CTD" id="35404"/>
<dbReference type="FlyBase" id="FBgn0023091">
    <property type="gene designation" value="dimm"/>
</dbReference>
<dbReference type="VEuPathDB" id="VectorBase:FBgn0023091"/>
<dbReference type="eggNOG" id="KOG3898">
    <property type="taxonomic scope" value="Eukaryota"/>
</dbReference>
<dbReference type="HOGENOM" id="CLU_704527_0_0_1"/>
<dbReference type="InParanoid" id="B6VQA1"/>
<dbReference type="OMA" id="NGGAFDC"/>
<dbReference type="OrthoDB" id="10039134at2759"/>
<dbReference type="PhylomeDB" id="B6VQA1"/>
<dbReference type="SignaLink" id="B6VQA1"/>
<dbReference type="BioGRID-ORCS" id="35404">
    <property type="hits" value="0 hits in 1 CRISPR screen"/>
</dbReference>
<dbReference type="GenomeRNAi" id="35404"/>
<dbReference type="PRO" id="PR:B6VQA1"/>
<dbReference type="Proteomes" id="UP000000803">
    <property type="component" value="Chromosome 2L"/>
</dbReference>
<dbReference type="Bgee" id="FBgn0023091">
    <property type="expression patterns" value="Expressed in adult middle midgut class II enteroendocrine cell in adult midgut (Drosophila) and 29 other cell types or tissues"/>
</dbReference>
<dbReference type="ExpressionAtlas" id="B6VQA1">
    <property type="expression patterns" value="baseline and differential"/>
</dbReference>
<dbReference type="GO" id="GO:0005737">
    <property type="term" value="C:cytoplasm"/>
    <property type="evidence" value="ECO:0007669"/>
    <property type="project" value="UniProtKB-SubCell"/>
</dbReference>
<dbReference type="GO" id="GO:0005634">
    <property type="term" value="C:nucleus"/>
    <property type="evidence" value="ECO:0000314"/>
    <property type="project" value="FlyBase"/>
</dbReference>
<dbReference type="GO" id="GO:0000981">
    <property type="term" value="F:DNA-binding transcription factor activity, RNA polymerase II-specific"/>
    <property type="evidence" value="ECO:0000318"/>
    <property type="project" value="GO_Central"/>
</dbReference>
<dbReference type="GO" id="GO:0070888">
    <property type="term" value="F:E-box binding"/>
    <property type="evidence" value="ECO:0000318"/>
    <property type="project" value="GO_Central"/>
</dbReference>
<dbReference type="GO" id="GO:0046983">
    <property type="term" value="F:protein dimerization activity"/>
    <property type="evidence" value="ECO:0007669"/>
    <property type="project" value="InterPro"/>
</dbReference>
<dbReference type="GO" id="GO:0061564">
    <property type="term" value="P:axon development"/>
    <property type="evidence" value="ECO:0000318"/>
    <property type="project" value="GO_Central"/>
</dbReference>
<dbReference type="GO" id="GO:0061101">
    <property type="term" value="P:neuroendocrine cell differentiation"/>
    <property type="evidence" value="ECO:0000315"/>
    <property type="project" value="FlyBase"/>
</dbReference>
<dbReference type="GO" id="GO:0046887">
    <property type="term" value="P:positive regulation of hormone secretion"/>
    <property type="evidence" value="ECO:0000315"/>
    <property type="project" value="FlyBase"/>
</dbReference>
<dbReference type="GO" id="GO:0002793">
    <property type="term" value="P:positive regulation of peptide secretion"/>
    <property type="evidence" value="ECO:0000315"/>
    <property type="project" value="FlyBase"/>
</dbReference>
<dbReference type="GO" id="GO:0045944">
    <property type="term" value="P:positive regulation of transcription by RNA polymerase II"/>
    <property type="evidence" value="ECO:0000315"/>
    <property type="project" value="FlyBase"/>
</dbReference>
<dbReference type="GO" id="GO:0006355">
    <property type="term" value="P:regulation of DNA-templated transcription"/>
    <property type="evidence" value="ECO:0000250"/>
    <property type="project" value="FlyBase"/>
</dbReference>
<dbReference type="GO" id="GO:0007423">
    <property type="term" value="P:sensory organ development"/>
    <property type="evidence" value="ECO:0000318"/>
    <property type="project" value="GO_Central"/>
</dbReference>
<dbReference type="GO" id="GO:0007419">
    <property type="term" value="P:ventral cord development"/>
    <property type="evidence" value="ECO:0007001"/>
    <property type="project" value="FlyBase"/>
</dbReference>
<dbReference type="CDD" id="cd19712">
    <property type="entry name" value="bHLH_TS_dimmed_like"/>
    <property type="match status" value="1"/>
</dbReference>
<dbReference type="Gene3D" id="4.10.280.10">
    <property type="entry name" value="Helix-loop-helix DNA-binding domain"/>
    <property type="match status" value="1"/>
</dbReference>
<dbReference type="InterPro" id="IPR011598">
    <property type="entry name" value="bHLH_dom"/>
</dbReference>
<dbReference type="InterPro" id="IPR050359">
    <property type="entry name" value="bHLH_transcription_factors"/>
</dbReference>
<dbReference type="InterPro" id="IPR036638">
    <property type="entry name" value="HLH_DNA-bd_sf"/>
</dbReference>
<dbReference type="PANTHER" id="PTHR19290">
    <property type="entry name" value="BASIC HELIX-LOOP-HELIX PROTEIN NEUROGENIN-RELATED"/>
    <property type="match status" value="1"/>
</dbReference>
<dbReference type="PANTHER" id="PTHR19290:SF167">
    <property type="entry name" value="PROTEIN DIMMED"/>
    <property type="match status" value="1"/>
</dbReference>
<dbReference type="Pfam" id="PF00010">
    <property type="entry name" value="HLH"/>
    <property type="match status" value="1"/>
</dbReference>
<dbReference type="SMART" id="SM00353">
    <property type="entry name" value="HLH"/>
    <property type="match status" value="1"/>
</dbReference>
<dbReference type="SUPFAM" id="SSF47459">
    <property type="entry name" value="HLH, helix-loop-helix DNA-binding domain"/>
    <property type="match status" value="1"/>
</dbReference>
<dbReference type="PROSITE" id="PS50888">
    <property type="entry name" value="BHLH"/>
    <property type="match status" value="1"/>
</dbReference>
<proteinExistence type="evidence at protein level"/>
<evidence type="ECO:0000255" key="1"/>
<evidence type="ECO:0000255" key="2">
    <source>
        <dbReference type="PROSITE-ProRule" id="PRU00981"/>
    </source>
</evidence>
<evidence type="ECO:0000256" key="3">
    <source>
        <dbReference type="SAM" id="MobiDB-lite"/>
    </source>
</evidence>
<evidence type="ECO:0000269" key="4">
    <source>
    </source>
</evidence>
<evidence type="ECO:0000269" key="5">
    <source>
    </source>
</evidence>
<evidence type="ECO:0000269" key="6">
    <source>
    </source>
</evidence>
<evidence type="ECO:0000269" key="7">
    <source>
    </source>
</evidence>
<evidence type="ECO:0000269" key="8">
    <source>
    </source>
</evidence>
<evidence type="ECO:0000269" key="9">
    <source>
    </source>
</evidence>
<evidence type="ECO:0000269" key="10">
    <source>
    </source>
</evidence>
<evidence type="ECO:0000269" key="11">
    <source>
    </source>
</evidence>
<evidence type="ECO:0000305" key="12"/>
<evidence type="ECO:0000312" key="13">
    <source>
        <dbReference type="EMBL" id="AAF53991.1"/>
    </source>
</evidence>
<evidence type="ECO:0000312" key="14">
    <source>
        <dbReference type="EMBL" id="ABI34200.4"/>
    </source>
</evidence>
<sequence length="390" mass="40980">MDATQLTELMGSHDFMQLQHQLHHNNNNYNTDGHNGLSSESAEGSSRPVRRATRRTSQLSNNTYDLEMTDSSSQSDDTSGGGGSSNGGGSTTNTGHPSGCSLGGQGPSGRGRVQQASSGACPSTIAPNSTSSNSSNANGNASRRRKGALNAKERNMRRLESNERERMRMHSLNDAFQSLREVIPHVEMERRLSKIETLTLAKNYIINLTHIILSKRNEEAAALELNSGAVGGVLLSNLSSESGGPVASGIPANSNAATICFEDTLASGGAFDCAILAATDGSLLNAATVTTSPAMQSIQSQAIHLQTPMEQQQQQASHLPHHQQAMHGHGHLGASIQSQQQPSLVLNGTTSVGLGIGIGVGVGVGVGVCNNAPSFADINDNFDEPFREFL</sequence>
<keyword id="KW-0963">Cytoplasm</keyword>
<keyword id="KW-0217">Developmental protein</keyword>
<keyword id="KW-0221">Differentiation</keyword>
<keyword id="KW-0238">DNA-binding</keyword>
<keyword id="KW-0325">Glycoprotein</keyword>
<keyword id="KW-1185">Reference proteome</keyword>
<keyword id="KW-0804">Transcription</keyword>
<keyword id="KW-0805">Transcription regulation</keyword>
<organism>
    <name type="scientific">Drosophila melanogaster</name>
    <name type="common">Fruit fly</name>
    <dbReference type="NCBI Taxonomy" id="7227"/>
    <lineage>
        <taxon>Eukaryota</taxon>
        <taxon>Metazoa</taxon>
        <taxon>Ecdysozoa</taxon>
        <taxon>Arthropoda</taxon>
        <taxon>Hexapoda</taxon>
        <taxon>Insecta</taxon>
        <taxon>Pterygota</taxon>
        <taxon>Neoptera</taxon>
        <taxon>Endopterygota</taxon>
        <taxon>Diptera</taxon>
        <taxon>Brachycera</taxon>
        <taxon>Muscomorpha</taxon>
        <taxon>Ephydroidea</taxon>
        <taxon>Drosophilidae</taxon>
        <taxon>Drosophila</taxon>
        <taxon>Sophophora</taxon>
    </lineage>
</organism>
<protein>
    <recommendedName>
        <fullName evidence="13">Protein dimmed</fullName>
    </recommendedName>
</protein>
<name>DIMM_DROME</name>
<comment type="function">
    <text evidence="5 6 7 8 9 10 11">Transcription factor that regulates neurosecretory (NS) cell function and neuroendocrine cell fate. Acts as a master regulator of common NS functions such as Phm expression and neuropeptide production. Plays a role as a regulator of peptide-containing large dense-core vesicle (LDCV) production and peptidergic cell differentiation. Controls transcription of FMRFamide in Tv neuronal cells and Fur1 in Ap-let cells (Tvb and dorsal apterous cells). Also required for up-regulation of Phm in Tv and Ap-let cells, and expression of three neuropeptide genes, Ms, FMRFamide and Lk. Influences both regulated and constitutive secretory activity in neuroendocrine cells at embryonic and postembryonic level. Loss of function studies show reduced cellular levels of various neuropeptides and neuropeptide biosynthetic enzymes.</text>
</comment>
<comment type="subunit">
    <text evidence="7 10">Forms homodimers via the bHLH domain. These dimers bind the core E-box sequence.</text>
</comment>
<comment type="interaction">
    <interactant intactId="EBI-166061">
        <id>B6VQA1</id>
    </interactant>
    <interactant intactId="EBI-152064">
        <id>P23792</id>
        <label>disco</label>
    </interactant>
    <organismsDiffer>false</organismsDiffer>
    <experiments>3</experiments>
</comment>
<comment type="subcellular location">
    <subcellularLocation>
        <location evidence="9">Cytoplasm</location>
    </subcellularLocation>
</comment>
<comment type="tissue specificity">
    <text evidence="4 5 6 7 9">Detected in the developing nervous system in the bilateral domains in the cephalic region that later on forms part of the ring gland. Concomitantly expressed in the larval central nervous system (CNS), including the dorsal chain neurons as well as several bilateral clusters of neurons: large, midline protocerebral brain cells (MC), lateral protocerebral brain cells (LC), ventral subesophageal neurons (SE) and lateral abdominal neurons, and the transverse nerves. Outside the CNS, detected in at least three classes of endocrine cells: intrinsic cells of the corpora cardiaca, midgut cells, the Inka cells, lateral Bipolar neurons associated with the segmental transverse nerve, and several peptidergic cells of the enteric nervous system. Expressed only in central and peripheral neuroendocrine secretory cells and neurosecretory neurons but not in sensory or motor neurons.</text>
</comment>
<comment type="developmental stage">
    <text evidence="4 5 7 9">First detected in the embryonic ectoderm at early stage 11, but this expression is transient. Zygotic expression is first detected in stage 12 embryos and cytoplasmic expression is detected in many cells around stage 14. Embryonic cells maintain expression throughout their lifetime and expression continues into hatchling larvae less than 24 hours old.</text>
</comment>
<comment type="domain">
    <text evidence="10">The basic domain binds to the canonical E-box (5'-CANNTG-3'), with a particular preference for TA relative to AT or CG in the variable central nucleotide positions.</text>
</comment>
<comment type="sequence caution" evidence="12">
    <conflict type="erroneous initiation">
        <sequence resource="EMBL-CDS" id="ABI34200"/>
    </conflict>
    <text>Extended N-terminus.</text>
</comment>
<comment type="sequence caution" evidence="12">
    <conflict type="erroneous initiation">
        <sequence resource="EMBL-CDS" id="ABI34232"/>
    </conflict>
    <text>Extended N-terminus.</text>
</comment>
<reference evidence="13" key="1">
    <citation type="journal article" date="2000" name="Science">
        <title>The genome sequence of Drosophila melanogaster.</title>
        <authorList>
            <person name="Adams M.D."/>
            <person name="Celniker S.E."/>
            <person name="Holt R.A."/>
            <person name="Evans C.A."/>
            <person name="Gocayne J.D."/>
            <person name="Amanatides P.G."/>
            <person name="Scherer S.E."/>
            <person name="Li P.W."/>
            <person name="Hoskins R.A."/>
            <person name="Galle R.F."/>
            <person name="George R.A."/>
            <person name="Lewis S.E."/>
            <person name="Richards S."/>
            <person name="Ashburner M."/>
            <person name="Henderson S.N."/>
            <person name="Sutton G.G."/>
            <person name="Wortman J.R."/>
            <person name="Yandell M.D."/>
            <person name="Zhang Q."/>
            <person name="Chen L.X."/>
            <person name="Brandon R.C."/>
            <person name="Rogers Y.-H.C."/>
            <person name="Blazej R.G."/>
            <person name="Champe M."/>
            <person name="Pfeiffer B.D."/>
            <person name="Wan K.H."/>
            <person name="Doyle C."/>
            <person name="Baxter E.G."/>
            <person name="Helt G."/>
            <person name="Nelson C.R."/>
            <person name="Miklos G.L.G."/>
            <person name="Abril J.F."/>
            <person name="Agbayani A."/>
            <person name="An H.-J."/>
            <person name="Andrews-Pfannkoch C."/>
            <person name="Baldwin D."/>
            <person name="Ballew R.M."/>
            <person name="Basu A."/>
            <person name="Baxendale J."/>
            <person name="Bayraktaroglu L."/>
            <person name="Beasley E.M."/>
            <person name="Beeson K.Y."/>
            <person name="Benos P.V."/>
            <person name="Berman B.P."/>
            <person name="Bhandari D."/>
            <person name="Bolshakov S."/>
            <person name="Borkova D."/>
            <person name="Botchan M.R."/>
            <person name="Bouck J."/>
            <person name="Brokstein P."/>
            <person name="Brottier P."/>
            <person name="Burtis K.C."/>
            <person name="Busam D.A."/>
            <person name="Butler H."/>
            <person name="Cadieu E."/>
            <person name="Center A."/>
            <person name="Chandra I."/>
            <person name="Cherry J.M."/>
            <person name="Cawley S."/>
            <person name="Dahlke C."/>
            <person name="Davenport L.B."/>
            <person name="Davies P."/>
            <person name="de Pablos B."/>
            <person name="Delcher A."/>
            <person name="Deng Z."/>
            <person name="Mays A.D."/>
            <person name="Dew I."/>
            <person name="Dietz S.M."/>
            <person name="Dodson K."/>
            <person name="Doup L.E."/>
            <person name="Downes M."/>
            <person name="Dugan-Rocha S."/>
            <person name="Dunkov B.C."/>
            <person name="Dunn P."/>
            <person name="Durbin K.J."/>
            <person name="Evangelista C.C."/>
            <person name="Ferraz C."/>
            <person name="Ferriera S."/>
            <person name="Fleischmann W."/>
            <person name="Fosler C."/>
            <person name="Gabrielian A.E."/>
            <person name="Garg N.S."/>
            <person name="Gelbart W.M."/>
            <person name="Glasser K."/>
            <person name="Glodek A."/>
            <person name="Gong F."/>
            <person name="Gorrell J.H."/>
            <person name="Gu Z."/>
            <person name="Guan P."/>
            <person name="Harris M."/>
            <person name="Harris N.L."/>
            <person name="Harvey D.A."/>
            <person name="Heiman T.J."/>
            <person name="Hernandez J.R."/>
            <person name="Houck J."/>
            <person name="Hostin D."/>
            <person name="Houston K.A."/>
            <person name="Howland T.J."/>
            <person name="Wei M.-H."/>
            <person name="Ibegwam C."/>
            <person name="Jalali M."/>
            <person name="Kalush F."/>
            <person name="Karpen G.H."/>
            <person name="Ke Z."/>
            <person name="Kennison J.A."/>
            <person name="Ketchum K.A."/>
            <person name="Kimmel B.E."/>
            <person name="Kodira C.D."/>
            <person name="Kraft C.L."/>
            <person name="Kravitz S."/>
            <person name="Kulp D."/>
            <person name="Lai Z."/>
            <person name="Lasko P."/>
            <person name="Lei Y."/>
            <person name="Levitsky A.A."/>
            <person name="Li J.H."/>
            <person name="Li Z."/>
            <person name="Liang Y."/>
            <person name="Lin X."/>
            <person name="Liu X."/>
            <person name="Mattei B."/>
            <person name="McIntosh T.C."/>
            <person name="McLeod M.P."/>
            <person name="McPherson D."/>
            <person name="Merkulov G."/>
            <person name="Milshina N.V."/>
            <person name="Mobarry C."/>
            <person name="Morris J."/>
            <person name="Moshrefi A."/>
            <person name="Mount S.M."/>
            <person name="Moy M."/>
            <person name="Murphy B."/>
            <person name="Murphy L."/>
            <person name="Muzny D.M."/>
            <person name="Nelson D.L."/>
            <person name="Nelson D.R."/>
            <person name="Nelson K.A."/>
            <person name="Nixon K."/>
            <person name="Nusskern D.R."/>
            <person name="Pacleb J.M."/>
            <person name="Palazzolo M."/>
            <person name="Pittman G.S."/>
            <person name="Pan S."/>
            <person name="Pollard J."/>
            <person name="Puri V."/>
            <person name="Reese M.G."/>
            <person name="Reinert K."/>
            <person name="Remington K."/>
            <person name="Saunders R.D.C."/>
            <person name="Scheeler F."/>
            <person name="Shen H."/>
            <person name="Shue B.C."/>
            <person name="Siden-Kiamos I."/>
            <person name="Simpson M."/>
            <person name="Skupski M.P."/>
            <person name="Smith T.J."/>
            <person name="Spier E."/>
            <person name="Spradling A.C."/>
            <person name="Stapleton M."/>
            <person name="Strong R."/>
            <person name="Sun E."/>
            <person name="Svirskas R."/>
            <person name="Tector C."/>
            <person name="Turner R."/>
            <person name="Venter E."/>
            <person name="Wang A.H."/>
            <person name="Wang X."/>
            <person name="Wang Z.-Y."/>
            <person name="Wassarman D.A."/>
            <person name="Weinstock G.M."/>
            <person name="Weissenbach J."/>
            <person name="Williams S.M."/>
            <person name="Woodage T."/>
            <person name="Worley K.C."/>
            <person name="Wu D."/>
            <person name="Yang S."/>
            <person name="Yao Q.A."/>
            <person name="Ye J."/>
            <person name="Yeh R.-F."/>
            <person name="Zaveri J.S."/>
            <person name="Zhan M."/>
            <person name="Zhang G."/>
            <person name="Zhao Q."/>
            <person name="Zheng L."/>
            <person name="Zheng X.H."/>
            <person name="Zhong F.N."/>
            <person name="Zhong W."/>
            <person name="Zhou X."/>
            <person name="Zhu S.C."/>
            <person name="Zhu X."/>
            <person name="Smith H.O."/>
            <person name="Gibbs R.A."/>
            <person name="Myers E.W."/>
            <person name="Rubin G.M."/>
            <person name="Venter J.C."/>
        </authorList>
    </citation>
    <scope>NUCLEOTIDE SEQUENCE [LARGE SCALE GENOMIC DNA]</scope>
    <source>
        <strain>Berkeley</strain>
    </source>
</reference>
<reference evidence="12 13" key="2">
    <citation type="journal article" date="2002" name="Genome Biol.">
        <title>Annotation of the Drosophila melanogaster euchromatic genome: a systematic review.</title>
        <authorList>
            <person name="Misra S."/>
            <person name="Crosby M.A."/>
            <person name="Mungall C.J."/>
            <person name="Matthews B.B."/>
            <person name="Campbell K.S."/>
            <person name="Hradecky P."/>
            <person name="Huang Y."/>
            <person name="Kaminker J.S."/>
            <person name="Millburn G.H."/>
            <person name="Prochnik S.E."/>
            <person name="Smith C.D."/>
            <person name="Tupy J.L."/>
            <person name="Whitfield E.J."/>
            <person name="Bayraktaroglu L."/>
            <person name="Berman B.P."/>
            <person name="Bettencourt B.R."/>
            <person name="Celniker S.E."/>
            <person name="de Grey A.D.N.J."/>
            <person name="Drysdale R.A."/>
            <person name="Harris N.L."/>
            <person name="Richter J."/>
            <person name="Russo S."/>
            <person name="Schroeder A.J."/>
            <person name="Shu S.Q."/>
            <person name="Stapleton M."/>
            <person name="Yamada C."/>
            <person name="Ashburner M."/>
            <person name="Gelbart W.M."/>
            <person name="Rubin G.M."/>
            <person name="Lewis S.E."/>
        </authorList>
    </citation>
    <scope>GENOME REANNOTATION</scope>
    <source>
        <strain>Berkeley</strain>
    </source>
</reference>
<reference evidence="14" key="3">
    <citation type="submission" date="2010-06" db="EMBL/GenBank/DDBJ databases">
        <authorList>
            <person name="Carlson J."/>
            <person name="Booth B."/>
            <person name="Frise E."/>
            <person name="Park S."/>
            <person name="Wan K."/>
            <person name="Yu C."/>
            <person name="Celniker S.E."/>
        </authorList>
    </citation>
    <scope>NUCLEOTIDE SEQUENCE [LARGE SCALE MRNA]</scope>
    <source>
        <strain>Berkeley</strain>
    </source>
</reference>
<reference evidence="12" key="4">
    <citation type="journal article" date="2000" name="Proc. Natl. Acad. Sci. U.S.A.">
        <title>A genomewide survey of basic helix-loop-helix factors in Drosophila.</title>
        <authorList>
            <person name="Moore A.W."/>
            <person name="Barbel S."/>
            <person name="Jan L.Y."/>
            <person name="Jan Y.N."/>
        </authorList>
    </citation>
    <scope>TISSUE SPECIFICITY</scope>
    <scope>DEVELOPMENTAL STAGE</scope>
</reference>
<reference evidence="12" key="5">
    <citation type="journal article" date="2003" name="Development">
        <title>The bHLH protein Dimmed controls neuroendocrine cell differentiation in Drosophila.</title>
        <authorList>
            <person name="Hewes R.S."/>
            <person name="Park D."/>
            <person name="Gauthier S.A."/>
            <person name="Schaefer A.M."/>
            <person name="Taghert P.H."/>
        </authorList>
    </citation>
    <scope>FUNCTION</scope>
    <scope>TISSUE SPECIFICITY</scope>
    <scope>DEVELOPMENTAL STAGE</scope>
    <source>
        <tissue evidence="7">Head</tissue>
    </source>
</reference>
<reference evidence="12" key="6">
    <citation type="journal article" date="2004" name="Dev. Biol.">
        <title>Ap-let neurons--a peptidergic circuit potentially controlling ecdysial behavior in Drosophila.</title>
        <authorList>
            <person name="Park D."/>
            <person name="Han M."/>
            <person name="Kim Y.C."/>
            <person name="Han K.A."/>
            <person name="Taghert P.H."/>
        </authorList>
    </citation>
    <scope>FUNCTION</scope>
    <scope>TISSUE SPECIFICITY</scope>
</reference>
<reference evidence="12" key="7">
    <citation type="journal article" date="2005" name="Neuron">
        <title>Regulators acting in combinatorial codes also act independently in single differentiating neurons.</title>
        <authorList>
            <person name="Allan D.W."/>
            <person name="Park D."/>
            <person name="St Pierre S.E."/>
            <person name="Taghert P.H."/>
            <person name="Thor S."/>
        </authorList>
    </citation>
    <scope>FUNCTION</scope>
    <scope>SUBUNIT</scope>
    <scope>TISSUE SPECIFICITY</scope>
    <scope>DEVELOPMENTAL STAGE</scope>
</reference>
<reference evidence="12" key="8">
    <citation type="journal article" date="2006" name="J. Exp. Biol.">
        <title>Transcriptional regulation of neuropeptide and peptide hormone expression by the Drosophila dimmed and cryptocephal genes.</title>
        <authorList>
            <person name="Gauthier S.A."/>
            <person name="Hewes R.S."/>
        </authorList>
    </citation>
    <scope>FUNCTION</scope>
</reference>
<reference evidence="12" key="9">
    <citation type="journal article" date="2006" name="J. Neurosci.">
        <title>Regulation of secretory protein expression in mature cells by DIMM, a basic helix-loop-helix neuroendocrine differentiation factor.</title>
        <authorList>
            <person name="Hewes R.S."/>
            <person name="Gu T."/>
            <person name="Brewster J.A."/>
            <person name="Qu C."/>
            <person name="Zhao T."/>
        </authorList>
    </citation>
    <scope>FUNCTION</scope>
    <scope>SUBCELLULAR LOCATION</scope>
    <scope>TISSUE SPECIFICITY</scope>
    <scope>DEVELOPMENTAL STAGE</scope>
    <source>
        <tissue evidence="6">Head</tissue>
    </source>
</reference>
<reference evidence="12" key="10">
    <citation type="journal article" date="2008" name="Mol. Cell. Biol.">
        <title>The Drosophila basic helix-loop-helix protein DIMMED directly activates PHM, a gene encoding a neuropeptide-amidating enzyme.</title>
        <authorList>
            <person name="Park D."/>
            <person name="Shafer O.T."/>
            <person name="Shepherd S.P."/>
            <person name="Suh H."/>
            <person name="Trigg J.S."/>
            <person name="Taghert P.H."/>
        </authorList>
    </citation>
    <scope>FUNCTION</scope>
    <scope>SUBUNIT</scope>
    <scope>DOMAIN</scope>
    <scope>MUTAGENESIS OF 164-ARG--ARG-166</scope>
</reference>
<reference evidence="12" key="11">
    <citation type="journal article" date="2010" name="Curr. Biol.">
        <title>Transcriptional orchestration of the regulated secretory pathway in neurons by the bHLH protein DIMM.</title>
        <authorList>
            <person name="Hamanaka Y."/>
            <person name="Park D."/>
            <person name="Yin P."/>
            <person name="Annangudi S.P."/>
            <person name="Edwards T.N."/>
            <person name="Sweedler J."/>
            <person name="Meinertzhagen I.A."/>
            <person name="Taghert P.H."/>
        </authorList>
    </citation>
    <scope>FUNCTION</scope>
</reference>
<feature type="chain" id="PRO_0000412993" description="Protein dimmed">
    <location>
        <begin position="1"/>
        <end position="390"/>
    </location>
</feature>
<feature type="domain" description="bHLH" evidence="2">
    <location>
        <begin position="156"/>
        <end position="208"/>
    </location>
</feature>
<feature type="region of interest" description="Disordered" evidence="3">
    <location>
        <begin position="24"/>
        <end position="163"/>
    </location>
</feature>
<feature type="region of interest" description="Disordered" evidence="3">
    <location>
        <begin position="312"/>
        <end position="339"/>
    </location>
</feature>
<feature type="compositionally biased region" description="Polar residues" evidence="3">
    <location>
        <begin position="29"/>
        <end position="44"/>
    </location>
</feature>
<feature type="compositionally biased region" description="Polar residues" evidence="3">
    <location>
        <begin position="55"/>
        <end position="64"/>
    </location>
</feature>
<feature type="compositionally biased region" description="Low complexity" evidence="3">
    <location>
        <begin position="69"/>
        <end position="78"/>
    </location>
</feature>
<feature type="compositionally biased region" description="Gly residues" evidence="3">
    <location>
        <begin position="79"/>
        <end position="90"/>
    </location>
</feature>
<feature type="compositionally biased region" description="Low complexity" evidence="3">
    <location>
        <begin position="122"/>
        <end position="141"/>
    </location>
</feature>
<feature type="compositionally biased region" description="Basic and acidic residues" evidence="3">
    <location>
        <begin position="151"/>
        <end position="163"/>
    </location>
</feature>
<feature type="glycosylation site" description="N-linked (GlcNAc...) asparagine" evidence="1">
    <location>
        <position position="61"/>
    </location>
</feature>
<feature type="glycosylation site" description="N-linked (GlcNAc...) asparagine" evidence="1">
    <location>
        <position position="128"/>
    </location>
</feature>
<feature type="glycosylation site" description="N-linked (GlcNAc...) asparagine" evidence="1">
    <location>
        <position position="133"/>
    </location>
</feature>
<feature type="glycosylation site" description="N-linked (GlcNAc...) asparagine" evidence="1">
    <location>
        <position position="140"/>
    </location>
</feature>
<feature type="glycosylation site" description="N-linked (GlcNAc...) asparagine" evidence="1">
    <location>
        <position position="207"/>
    </location>
</feature>
<feature type="glycosylation site" description="N-linked (GlcNAc...) asparagine" evidence="1">
    <location>
        <position position="237"/>
    </location>
</feature>
<feature type="glycosylation site" description="N-linked (GlcNAc...) asparagine" evidence="1">
    <location>
        <position position="347"/>
    </location>
</feature>
<feature type="mutagenesis site" description="Reduced DNA-binding activity." evidence="10">
    <original>RER</original>
    <variation>GGG</variation>
    <location>
        <begin position="164"/>
        <end position="166"/>
    </location>
</feature>
<gene>
    <name type="primary">dimm</name>
    <name type="ORF">CG8667</name>
</gene>
<accession>B6VQA1</accession>
<accession>Q0IGR9</accession>
<accession>Q9VID2</accession>